<comment type="similarity">
    <text evidence="1">Belongs to the AtsA family.</text>
</comment>
<accession>P9WGC0</accession>
<accession>L0T6K2</accession>
<accession>P66873</accession>
<accession>Q10648</accession>
<gene>
    <name type="ordered locus">MT1380</name>
</gene>
<proteinExistence type="inferred from homology"/>
<evidence type="ECO:0000305" key="1"/>
<organism>
    <name type="scientific">Mycobacterium tuberculosis (strain CDC 1551 / Oshkosh)</name>
    <dbReference type="NCBI Taxonomy" id="83331"/>
    <lineage>
        <taxon>Bacteria</taxon>
        <taxon>Bacillati</taxon>
        <taxon>Actinomycetota</taxon>
        <taxon>Actinomycetes</taxon>
        <taxon>Mycobacteriales</taxon>
        <taxon>Mycobacteriaceae</taxon>
        <taxon>Mycobacterium</taxon>
        <taxon>Mycobacterium tuberculosis complex</taxon>
    </lineage>
</organism>
<name>Y1339_MYCTO</name>
<sequence>MRRCIPHRCIGHGTVVSVRITVLGCSGSVVGPDSPASGYLLRAPHTPPLVIDFGGGVLGALQRHADPASVHVLLSHLHADHCLDLPGLFVWRRYHPSRPSGKALLYGPSDTWSRLGAASSPYGGEIDDCSDIFDVHHWADSEPVTLGALTIVPRLVAHPTESFGLRITDPSGASLAYSGDTGICDQLVELARGVDVFLCEASWTHSPKHPPDLHLSGTEAGMVAAQAGVRELLLTHIPPWTSREDVISEAKAEFDGPVHAVVCDETFEVRRAG</sequence>
<feature type="chain" id="PRO_0000428388" description="Uncharacterized protein MT1380">
    <location>
        <begin position="1"/>
        <end position="273"/>
    </location>
</feature>
<protein>
    <recommendedName>
        <fullName>Uncharacterized protein MT1380</fullName>
    </recommendedName>
</protein>
<keyword id="KW-1185">Reference proteome</keyword>
<reference key="1">
    <citation type="journal article" date="2002" name="J. Bacteriol.">
        <title>Whole-genome comparison of Mycobacterium tuberculosis clinical and laboratory strains.</title>
        <authorList>
            <person name="Fleischmann R.D."/>
            <person name="Alland D."/>
            <person name="Eisen J.A."/>
            <person name="Carpenter L."/>
            <person name="White O."/>
            <person name="Peterson J.D."/>
            <person name="DeBoy R.T."/>
            <person name="Dodson R.J."/>
            <person name="Gwinn M.L."/>
            <person name="Haft D.H."/>
            <person name="Hickey E.K."/>
            <person name="Kolonay J.F."/>
            <person name="Nelson W.C."/>
            <person name="Umayam L.A."/>
            <person name="Ermolaeva M.D."/>
            <person name="Salzberg S.L."/>
            <person name="Delcher A."/>
            <person name="Utterback T.R."/>
            <person name="Weidman J.F."/>
            <person name="Khouri H.M."/>
            <person name="Gill J."/>
            <person name="Mikula A."/>
            <person name="Bishai W."/>
            <person name="Jacobs W.R. Jr."/>
            <person name="Venter J.C."/>
            <person name="Fraser C.M."/>
        </authorList>
    </citation>
    <scope>NUCLEOTIDE SEQUENCE [LARGE SCALE GENOMIC DNA]</scope>
    <source>
        <strain>CDC 1551 / Oshkosh</strain>
    </source>
</reference>
<dbReference type="EMBL" id="AE000516">
    <property type="protein sequence ID" value="AAK45645.1"/>
    <property type="molecule type" value="Genomic_DNA"/>
</dbReference>
<dbReference type="PIR" id="B70739">
    <property type="entry name" value="B70739"/>
</dbReference>
<dbReference type="SMR" id="P9WGC0"/>
<dbReference type="KEGG" id="mtc:MT1380"/>
<dbReference type="PATRIC" id="fig|83331.31.peg.1488"/>
<dbReference type="HOGENOM" id="CLU_031317_3_0_11"/>
<dbReference type="Proteomes" id="UP000001020">
    <property type="component" value="Chromosome"/>
</dbReference>
<dbReference type="GO" id="GO:0042781">
    <property type="term" value="F:3'-tRNA processing endoribonuclease activity"/>
    <property type="evidence" value="ECO:0007669"/>
    <property type="project" value="TreeGrafter"/>
</dbReference>
<dbReference type="CDD" id="cd07716">
    <property type="entry name" value="RNaseZ_short-form-like_MBL-fold"/>
    <property type="match status" value="1"/>
</dbReference>
<dbReference type="FunFam" id="3.60.15.10:FF:000087">
    <property type="entry name" value="MBL fold metallo-hydrolase"/>
    <property type="match status" value="1"/>
</dbReference>
<dbReference type="Gene3D" id="3.60.15.10">
    <property type="entry name" value="Ribonuclease Z/Hydroxyacylglutathione hydrolase-like"/>
    <property type="match status" value="1"/>
</dbReference>
<dbReference type="InterPro" id="IPR054857">
    <property type="entry name" value="cyc_nuc_deg_phdiest"/>
</dbReference>
<dbReference type="InterPro" id="IPR001279">
    <property type="entry name" value="Metallo-B-lactamas"/>
</dbReference>
<dbReference type="InterPro" id="IPR036866">
    <property type="entry name" value="RibonucZ/Hydroxyglut_hydro"/>
</dbReference>
<dbReference type="NCBIfam" id="NF041851">
    <property type="entry name" value="cyc_nuc_deg_phdiest"/>
    <property type="match status" value="1"/>
</dbReference>
<dbReference type="PANTHER" id="PTHR46018:SF4">
    <property type="entry name" value="METALLO-HYDROLASE YHFI-RELATED"/>
    <property type="match status" value="1"/>
</dbReference>
<dbReference type="PANTHER" id="PTHR46018">
    <property type="entry name" value="ZINC PHOSPHODIESTERASE ELAC PROTEIN 1"/>
    <property type="match status" value="1"/>
</dbReference>
<dbReference type="Pfam" id="PF12706">
    <property type="entry name" value="Lactamase_B_2"/>
    <property type="match status" value="1"/>
</dbReference>
<dbReference type="SUPFAM" id="SSF56281">
    <property type="entry name" value="Metallo-hydrolase/oxidoreductase"/>
    <property type="match status" value="1"/>
</dbReference>